<name>CYDD_ECOLI</name>
<proteinExistence type="evidence at protein level"/>
<comment type="function">
    <text evidence="4 5 7 9 10 12 13 18 19 20">Part of the ABC transporter complex CydDC that exports the reduced low-molecular-weight thiols cysteine and glutathione to the periplasm (PubMed:12393891, PubMed:16040611). Export of these thiol-containing redox-active molecules may be crucial for redox homeostasis in the periplasm, permitting correct assembly of various respiratory complexes and formation of correct disulfide bonds in periplasmic and secreted proteins (Probable). CydD contains transmembrane domains (TMD), which form a pore in the inner membrane, and an ATP-binding domain (NBD), which is responsible for energy generation (PubMed:24958725). Required for the assembly of functional cytochrome bd-type quinol oxidases and periplasmic c-type cytochromes (PubMed:15470119, PubMed:7934832, PubMed:8181727). Overexpression of CydDC under anaerobic conditions also results in the formation of a heme biosynthesis-derived pigment, P-574 (PubMed:12375104). CydDC binds heme b, but heme is probably not transported by the complex and instead has a role in regulating ATPase activity (PubMed:24958725).</text>
</comment>
<comment type="function">
    <text evidence="11">Conversely, a more recent study suggests an alternative function of CydDC: authors suggest that CydDC does not mediate the export of L-cysteine but rather reduces cytoplasmic L-cystine to L-cysteine (PubMed:32900959). The principle function of CydDC would be to maintain the reduced state of cytoplasmic L-cysteine, thereby providing an important connection between sulfur metabolism, oxidative stress and resistance to antibiotics (PubMed:32900959).</text>
</comment>
<comment type="catalytic activity">
    <reaction evidence="5">
        <text>L-cysteine(in) + ATP + H2O = L-cysteine(out) + ADP + phosphate + H(+)</text>
        <dbReference type="Rhea" id="RHEA:29783"/>
        <dbReference type="ChEBI" id="CHEBI:15377"/>
        <dbReference type="ChEBI" id="CHEBI:15378"/>
        <dbReference type="ChEBI" id="CHEBI:30616"/>
        <dbReference type="ChEBI" id="CHEBI:35235"/>
        <dbReference type="ChEBI" id="CHEBI:43474"/>
        <dbReference type="ChEBI" id="CHEBI:456216"/>
    </reaction>
    <physiologicalReaction direction="left-to-right" evidence="5">
        <dbReference type="Rhea" id="RHEA:29784"/>
    </physiologicalReaction>
</comment>
<comment type="catalytic activity">
    <reaction evidence="9">
        <text>glutathione(in) + ATP + H2O = glutathione(out) + ADP + phosphate + H(+)</text>
        <dbReference type="Rhea" id="RHEA:29787"/>
        <dbReference type="ChEBI" id="CHEBI:15377"/>
        <dbReference type="ChEBI" id="CHEBI:15378"/>
        <dbReference type="ChEBI" id="CHEBI:30616"/>
        <dbReference type="ChEBI" id="CHEBI:43474"/>
        <dbReference type="ChEBI" id="CHEBI:57925"/>
        <dbReference type="ChEBI" id="CHEBI:456216"/>
    </reaction>
    <physiologicalReaction direction="left-to-right" evidence="9">
        <dbReference type="Rhea" id="RHEA:29788"/>
    </physiologicalReaction>
</comment>
<comment type="activity regulation">
    <text evidence="9 10">ATPase activity is stimulated by various thiol compounds (PubMed:24958725). The presence of heme leads to a further enhancement of thiol-stimulated ATPase activity, although a large excess of heme inhibits activity (PubMed:24958725). Glutathione transport is inhibited by sodium orthovanadate, an inhibitor of ABC-type transport systems, but not by the proton ionophore carbonyl cyanide m-chlorophenylhydrazone (CCCP) (PubMed:16040611).</text>
</comment>
<comment type="subunit">
    <text evidence="7 10">Forms a heterodimer with CydC.</text>
</comment>
<comment type="subcellular location">
    <subcellularLocation>
        <location evidence="7 8">Cell inner membrane</location>
        <topology evidence="7">Multi-pass membrane protein</topology>
    </subcellularLocation>
</comment>
<comment type="induction">
    <text evidence="14">Part of the cydDC operon, which is highly expressed under aerobic growth conditions and during anaerobic growth with alternative electron acceptors such as nitrite or nitrate (PubMed:9335308). Induction by nitrate and nitrite is dependent on NarL and Fnr (PubMed:9335308).</text>
</comment>
<comment type="domain">
    <text evidence="17">In CydD the ATP-binding domain (NBD) and the transmembrane domain (TMD) are fused.</text>
</comment>
<comment type="disruption phenotype">
    <text evidence="5 6 12 13">Mutation affects cysteine transport (PubMed:1310500). Inactivation of the gene leads to H(2)O(2) sensitivity and to growth inhibition in the presence of cysteine (PubMed:1310500). Mutant lacks functional cytochrome bd complex (PubMed:7934832). It is also defective in the assembly of periplasmic c-type cytochromes (PubMed:8181727). Mutant is much more sensitive to the lethal effects of heat than the wild-type strain (PubMed:1310500). Displays a cysteine-reversible defect in motility and sensitivity to benzylpenicillin and dithiothreitol (PubMed:12393891). Mutant is hypersensitive to high cysteine concentrations and accumulates higher cytoplasmic cysteine levels (PubMed:12393891).</text>
</comment>
<comment type="miscellaneous">
    <text evidence="5">Overexpression of CydDC confers resistance to exogenous cysteine toxicity.</text>
</comment>
<comment type="similarity">
    <text evidence="17">Belongs to the ABC transporter superfamily. Cysteine exporter (TC 3.A.1.129.1) family.</text>
</comment>
<comment type="sequence caution" evidence="17">
    <conflict type="frameshift">
        <sequence resource="EMBL-CDS" id="AAA23995"/>
    </conflict>
</comment>
<feature type="chain" id="PRO_0000092244" description="Glutathione/L-cysteine transport system ATP-binding/permease protein CydD">
    <location>
        <begin position="1"/>
        <end position="588"/>
    </location>
</feature>
<feature type="topological domain" description="Cytoplasmic" evidence="7">
    <location>
        <begin position="1"/>
        <end position="15"/>
    </location>
</feature>
<feature type="transmembrane region" description="Helical" evidence="1">
    <location>
        <begin position="16"/>
        <end position="36"/>
    </location>
</feature>
<feature type="transmembrane region" description="Helical" evidence="1">
    <location>
        <begin position="37"/>
        <end position="57"/>
    </location>
</feature>
<feature type="topological domain" description="Cytoplasmic" evidence="7">
    <location>
        <begin position="58"/>
        <end position="136"/>
    </location>
</feature>
<feature type="transmembrane region" description="Helical" evidence="1">
    <location>
        <begin position="137"/>
        <end position="157"/>
    </location>
</feature>
<feature type="topological domain" description="Periplasmic" evidence="7">
    <location>
        <begin position="158"/>
        <end position="161"/>
    </location>
</feature>
<feature type="transmembrane region" description="Helical" evidence="1">
    <location>
        <begin position="162"/>
        <end position="182"/>
    </location>
</feature>
<feature type="topological domain" description="Cytoplasmic" evidence="7">
    <location>
        <begin position="183"/>
        <end position="249"/>
    </location>
</feature>
<feature type="transmembrane region" description="Helical" evidence="1">
    <location>
        <begin position="250"/>
        <end position="270"/>
    </location>
</feature>
<feature type="topological domain" description="Periplasmic" evidence="7">
    <location>
        <begin position="271"/>
        <end position="276"/>
    </location>
</feature>
<feature type="transmembrane region" description="Helical" evidence="1">
    <location>
        <begin position="277"/>
        <end position="297"/>
    </location>
</feature>
<feature type="topological domain" description="Cytoplasmic" evidence="7">
    <location>
        <begin position="298"/>
        <end position="573"/>
    </location>
</feature>
<feature type="domain" description="ABC transmembrane type-1" evidence="3">
    <location>
        <begin position="20"/>
        <end position="306"/>
    </location>
</feature>
<feature type="domain" description="ABC transporter" evidence="2">
    <location>
        <begin position="339"/>
        <end position="572"/>
    </location>
</feature>
<feature type="binding site" evidence="2">
    <location>
        <begin position="373"/>
        <end position="380"/>
    </location>
    <ligand>
        <name>ATP</name>
        <dbReference type="ChEBI" id="CHEBI:30616"/>
    </ligand>
</feature>
<feature type="mutagenesis site" description="Exhibits significantly lower levels of cytochrome d than the wild-type; when associated with G-216." evidence="7">
    <original>R</original>
    <variation>G</variation>
    <location>
        <position position="210"/>
    </location>
</feature>
<feature type="mutagenesis site" description="Does not affect cytochrome d levels; when associated with K-216." evidence="7">
    <original>R</original>
    <variation>K</variation>
    <location>
        <position position="210"/>
    </location>
</feature>
<feature type="mutagenesis site" description="Exhibits significantly lower levels of cytochrome d than the wild-type; when associated with G-210." evidence="7">
    <original>R</original>
    <variation>G</variation>
    <location>
        <position position="216"/>
    </location>
</feature>
<feature type="mutagenesis site" description="Does not affect cytochrome d levels; when associated with K-210." evidence="7">
    <original>R</original>
    <variation>K</variation>
    <location>
        <position position="216"/>
    </location>
</feature>
<feature type="mutagenesis site" description="Exhibits significantly lower levels of cytochrome d than the wild-type; when associated with G-244." evidence="7">
    <original>R</original>
    <variation>G</variation>
    <location>
        <position position="238"/>
    </location>
</feature>
<feature type="mutagenesis site" description="Does not affect cytochrome d levels; when associated with H-244." evidence="7">
    <original>R</original>
    <variation>H</variation>
    <location>
        <position position="238"/>
    </location>
</feature>
<feature type="mutagenesis site" description="Exhibits significantly lower levels of cytochrome d than the wild-type; when associated with G-238." evidence="7">
    <original>R</original>
    <variation>G</variation>
    <location>
        <position position="244"/>
    </location>
</feature>
<feature type="mutagenesis site" description="Does not affect cytochrome d levels; when associated with H-238." evidence="7">
    <original>R</original>
    <variation>H</variation>
    <location>
        <position position="244"/>
    </location>
</feature>
<feature type="sequence conflict" description="In Ref. 6; AAA23995." evidence="17" ref="6">
    <location>
        <position position="64"/>
    </location>
</feature>
<feature type="sequence conflict" description="In Ref. 5; AAC36863." evidence="17" ref="5">
    <original>A</original>
    <variation>R</variation>
    <location>
        <position position="313"/>
    </location>
</feature>
<feature type="sequence conflict" description="In Ref. 1; AAA66171." evidence="17" ref="1">
    <original>W</original>
    <variation>S</variation>
    <location>
        <position position="427"/>
    </location>
</feature>
<feature type="helix" evidence="25">
    <location>
        <begin position="3"/>
        <end position="15"/>
    </location>
</feature>
<feature type="helix" evidence="25">
    <location>
        <begin position="16"/>
        <end position="18"/>
    </location>
</feature>
<feature type="helix" evidence="25">
    <location>
        <begin position="21"/>
        <end position="54"/>
    </location>
</feature>
<feature type="turn" evidence="25">
    <location>
        <begin position="59"/>
        <end position="61"/>
    </location>
</feature>
<feature type="helix" evidence="25">
    <location>
        <begin position="64"/>
        <end position="114"/>
    </location>
</feature>
<feature type="helix" evidence="25">
    <location>
        <begin position="119"/>
        <end position="126"/>
    </location>
</feature>
<feature type="helix" evidence="25">
    <location>
        <begin position="128"/>
        <end position="131"/>
    </location>
</feature>
<feature type="helix" evidence="25">
    <location>
        <begin position="134"/>
        <end position="138"/>
    </location>
</feature>
<feature type="helix" evidence="25">
    <location>
        <begin position="140"/>
        <end position="156"/>
    </location>
</feature>
<feature type="turn" evidence="25">
    <location>
        <begin position="157"/>
        <end position="161"/>
    </location>
</feature>
<feature type="helix" evidence="25">
    <location>
        <begin position="163"/>
        <end position="172"/>
    </location>
</feature>
<feature type="helix" evidence="25">
    <location>
        <begin position="175"/>
        <end position="183"/>
    </location>
</feature>
<feature type="helix" evidence="25">
    <location>
        <begin position="184"/>
        <end position="186"/>
    </location>
</feature>
<feature type="helix" evidence="25">
    <location>
        <begin position="187"/>
        <end position="210"/>
    </location>
</feature>
<feature type="helix" evidence="25">
    <location>
        <begin position="212"/>
        <end position="218"/>
    </location>
</feature>
<feature type="helix" evidence="25">
    <location>
        <begin position="221"/>
        <end position="273"/>
    </location>
</feature>
<feature type="strand" evidence="25">
    <location>
        <begin position="279"/>
        <end position="283"/>
    </location>
</feature>
<feature type="helix" evidence="25">
    <location>
        <begin position="287"/>
        <end position="327"/>
    </location>
</feature>
<feature type="strand" evidence="25">
    <location>
        <begin position="333"/>
        <end position="336"/>
    </location>
</feature>
<feature type="strand" evidence="28">
    <location>
        <begin position="344"/>
        <end position="346"/>
    </location>
</feature>
<feature type="strand" evidence="25">
    <location>
        <begin position="350"/>
        <end position="358"/>
    </location>
</feature>
<feature type="strand" evidence="27">
    <location>
        <begin position="360"/>
        <end position="362"/>
    </location>
</feature>
<feature type="strand" evidence="25">
    <location>
        <begin position="364"/>
        <end position="373"/>
    </location>
</feature>
<feature type="strand" evidence="25">
    <location>
        <begin position="378"/>
        <end position="383"/>
    </location>
</feature>
<feature type="strand" evidence="21">
    <location>
        <begin position="385"/>
        <end position="387"/>
    </location>
</feature>
<feature type="helix" evidence="25">
    <location>
        <begin position="389"/>
        <end position="396"/>
    </location>
</feature>
<feature type="strand" evidence="25">
    <location>
        <begin position="400"/>
        <end position="408"/>
    </location>
</feature>
<feature type="helix" evidence="25">
    <location>
        <begin position="413"/>
        <end position="415"/>
    </location>
</feature>
<feature type="helix" evidence="25">
    <location>
        <begin position="418"/>
        <end position="422"/>
    </location>
</feature>
<feature type="strand" evidence="25">
    <location>
        <begin position="425"/>
        <end position="428"/>
    </location>
</feature>
<feature type="strand" evidence="25">
    <location>
        <begin position="436"/>
        <end position="438"/>
    </location>
</feature>
<feature type="helix" evidence="25">
    <location>
        <begin position="439"/>
        <end position="443"/>
    </location>
</feature>
<feature type="strand" evidence="22">
    <location>
        <begin position="446"/>
        <end position="449"/>
    </location>
</feature>
<feature type="helix" evidence="25">
    <location>
        <begin position="452"/>
        <end position="461"/>
    </location>
</feature>
<feature type="helix" evidence="27">
    <location>
        <begin position="464"/>
        <end position="466"/>
    </location>
</feature>
<feature type="turn" evidence="25">
    <location>
        <begin position="468"/>
        <end position="470"/>
    </location>
</feature>
<feature type="strand" evidence="25">
    <location>
        <begin position="471"/>
        <end position="473"/>
    </location>
</feature>
<feature type="helix" evidence="25">
    <location>
        <begin position="474"/>
        <end position="476"/>
    </location>
</feature>
<feature type="helix" evidence="23">
    <location>
        <begin position="481"/>
        <end position="483"/>
    </location>
</feature>
<feature type="helix" evidence="25">
    <location>
        <begin position="488"/>
        <end position="499"/>
    </location>
</feature>
<feature type="strand" evidence="26">
    <location>
        <begin position="500"/>
        <end position="502"/>
    </location>
</feature>
<feature type="strand" evidence="25">
    <location>
        <begin position="505"/>
        <end position="511"/>
    </location>
</feature>
<feature type="turn" evidence="25">
    <location>
        <begin position="512"/>
        <end position="515"/>
    </location>
</feature>
<feature type="helix" evidence="25">
    <location>
        <begin position="518"/>
        <end position="532"/>
    </location>
</feature>
<feature type="strand" evidence="25">
    <location>
        <begin position="534"/>
        <end position="540"/>
    </location>
</feature>
<feature type="helix" evidence="24">
    <location>
        <begin position="544"/>
        <end position="546"/>
    </location>
</feature>
<feature type="strand" evidence="25">
    <location>
        <begin position="549"/>
        <end position="557"/>
    </location>
</feature>
<feature type="strand" evidence="25">
    <location>
        <begin position="560"/>
        <end position="563"/>
    </location>
</feature>
<feature type="helix" evidence="25">
    <location>
        <begin position="567"/>
        <end position="572"/>
    </location>
</feature>
<feature type="helix" evidence="25">
    <location>
        <begin position="575"/>
        <end position="582"/>
    </location>
</feature>
<organism>
    <name type="scientific">Escherichia coli (strain K12)</name>
    <dbReference type="NCBI Taxonomy" id="83333"/>
    <lineage>
        <taxon>Bacteria</taxon>
        <taxon>Pseudomonadati</taxon>
        <taxon>Pseudomonadota</taxon>
        <taxon>Gammaproteobacteria</taxon>
        <taxon>Enterobacterales</taxon>
        <taxon>Enterobacteriaceae</taxon>
        <taxon>Escherichia</taxon>
    </lineage>
</organism>
<accession>P29018</accession>
<accession>P77275</accession>
<accession>Q47656</accession>
<gene>
    <name evidence="16" type="primary">cydD</name>
    <name evidence="15" type="synonym">htrD</name>
    <name type="ordered locus">b0887</name>
    <name type="ordered locus">JW0870</name>
</gene>
<sequence>MNKSRQKELTRWLKQQSVISQRWLNISRLLGFVSGILIIAQAWFMARILQHMIMENIPREALLLPFTLLVLTFVLRAWVVWLRERVGYHAGQHIRFAIRRQVLDRLQQAGPAWIQGKPAGSWATLVLEQIDDMHDYYARYLPQMALAVSVPLLIVVAIFPSNWAAALILLGTAPLIPLFMALVGMGAADANRRNFLALARLSGHFLDRLRGMETLRIFGRGEAEIESIRSASEDFRQRTMEVLRLAFLSSGILEFFTSLSIALVAVYFGFSYLGELDFGHYDTGVTLAAGFLALILAPEFFQPLRDLGTFYHAKAQAVGAADSLKTFMETPLAHPQRGEAELASTDPVTIEAEELFITSPEGKTLAGPLNFTLPAGQRAVLVGRSGSGKSSLLNALSGFLSYQGSLRINGIELRDLSPESWRKHLSWVGQNPQLPAATLRDNVLLARPDASEQELQAALDNAWVSEFLPLLPQGVDTPVGDQAARLSVGQAQRVAVARALLNPCSLLLLDEPAASLDAHSEQRVMEALNAASLRQTTLMVTHQLEDLADWDVIWVMQDGRIIEQGRYAELSVAGGPFATLLAHRQEEI</sequence>
<protein>
    <recommendedName>
        <fullName evidence="17">Glutathione/L-cysteine transport system ATP-binding/permease protein CydD</fullName>
        <ecNumber evidence="5 9">7.4.2.-</ecNumber>
    </recommendedName>
</protein>
<reference key="1">
    <citation type="journal article" date="1993" name="Mol. Microbiol.">
        <title>Cytochrome bd biosynthesis in Escherichia coli: the sequences of the cydC and cydD genes suggest that they encode the components of an ABC membrane transporter.</title>
        <authorList>
            <person name="Poole R.K."/>
            <person name="Hatch L."/>
            <person name="Cleeter M.W.J."/>
            <person name="Gibson F."/>
            <person name="Cox G.B."/>
            <person name="Wu G."/>
        </authorList>
    </citation>
    <scope>NUCLEOTIDE SEQUENCE [GENOMIC DNA]</scope>
    <scope>FUNCTION IN CYTOCHROME BD FORMATION</scope>
    <scope>DISRUPTION PHENOTYPE</scope>
</reference>
<reference key="2">
    <citation type="journal article" date="1996" name="DNA Res.">
        <title>A 718-kb DNA sequence of the Escherichia coli K-12 genome corresponding to the 12.7-28.0 min region on the linkage map.</title>
        <authorList>
            <person name="Oshima T."/>
            <person name="Aiba H."/>
            <person name="Baba T."/>
            <person name="Fujita K."/>
            <person name="Hayashi K."/>
            <person name="Honjo A."/>
            <person name="Ikemoto K."/>
            <person name="Inada T."/>
            <person name="Itoh T."/>
            <person name="Kajihara M."/>
            <person name="Kanai K."/>
            <person name="Kashimoto K."/>
            <person name="Kimura S."/>
            <person name="Kitagawa M."/>
            <person name="Makino K."/>
            <person name="Masuda S."/>
            <person name="Miki T."/>
            <person name="Mizobuchi K."/>
            <person name="Mori H."/>
            <person name="Motomura K."/>
            <person name="Nakamura Y."/>
            <person name="Nashimoto H."/>
            <person name="Nishio Y."/>
            <person name="Saito N."/>
            <person name="Sampei G."/>
            <person name="Seki Y."/>
            <person name="Tagami H."/>
            <person name="Takemoto K."/>
            <person name="Wada C."/>
            <person name="Yamamoto Y."/>
            <person name="Yano M."/>
            <person name="Horiuchi T."/>
        </authorList>
    </citation>
    <scope>NUCLEOTIDE SEQUENCE [LARGE SCALE GENOMIC DNA]</scope>
    <source>
        <strain>K12 / W3110 / ATCC 27325 / DSM 5911</strain>
    </source>
</reference>
<reference key="3">
    <citation type="journal article" date="1997" name="Science">
        <title>The complete genome sequence of Escherichia coli K-12.</title>
        <authorList>
            <person name="Blattner F.R."/>
            <person name="Plunkett G. III"/>
            <person name="Bloch C.A."/>
            <person name="Perna N.T."/>
            <person name="Burland V."/>
            <person name="Riley M."/>
            <person name="Collado-Vides J."/>
            <person name="Glasner J.D."/>
            <person name="Rode C.K."/>
            <person name="Mayhew G.F."/>
            <person name="Gregor J."/>
            <person name="Davis N.W."/>
            <person name="Kirkpatrick H.A."/>
            <person name="Goeden M.A."/>
            <person name="Rose D.J."/>
            <person name="Mau B."/>
            <person name="Shao Y."/>
        </authorList>
    </citation>
    <scope>NUCLEOTIDE SEQUENCE [LARGE SCALE GENOMIC DNA]</scope>
    <source>
        <strain>K12 / MG1655 / ATCC 47076</strain>
    </source>
</reference>
<reference key="4">
    <citation type="journal article" date="2006" name="Mol. Syst. Biol.">
        <title>Highly accurate genome sequences of Escherichia coli K-12 strains MG1655 and W3110.</title>
        <authorList>
            <person name="Hayashi K."/>
            <person name="Morooka N."/>
            <person name="Yamamoto Y."/>
            <person name="Fujita K."/>
            <person name="Isono K."/>
            <person name="Choi S."/>
            <person name="Ohtsubo E."/>
            <person name="Baba T."/>
            <person name="Wanner B.L."/>
            <person name="Mori H."/>
            <person name="Horiuchi T."/>
        </authorList>
    </citation>
    <scope>NUCLEOTIDE SEQUENCE [LARGE SCALE GENOMIC DNA]</scope>
    <source>
        <strain>K12 / W3110 / ATCC 27325 / DSM 5911</strain>
    </source>
</reference>
<reference key="5">
    <citation type="journal article" date="1993" name="Genes Dev.">
        <title>Isolation and characterization of an Escherichia coli mutant defective in resuming growth after starvation.</title>
        <authorList>
            <person name="Siegele D.D."/>
            <person name="Kolter R."/>
        </authorList>
    </citation>
    <scope>NUCLEOTIDE SEQUENCE [GENOMIC DNA] OF 48-588</scope>
</reference>
<reference key="6">
    <citation type="journal article" date="1993" name="J. Bacteriol.">
        <title>Molecular characterization of the Escherichia coli htrD gene: cloning, sequence, regulation, and involvement with cytochrome d oxidase.</title>
        <authorList>
            <person name="Delaney J.M."/>
            <person name="Wall D."/>
            <person name="Georgopoulos C."/>
        </authorList>
    </citation>
    <scope>NUCLEOTIDE SEQUENCE [GENOMIC DNA] OF 1-152</scope>
    <source>
        <strain>K12</strain>
    </source>
</reference>
<reference key="7">
    <citation type="journal article" date="1992" name="J. Bacteriol.">
        <title>Isolation and characterization of the Escherichia coli htrD gene, whose product is required for growth at high temperatures.</title>
        <authorList>
            <person name="Delaney J.M."/>
            <person name="Ang D."/>
            <person name="Georgopoulos C."/>
        </authorList>
    </citation>
    <scope>DISRUPTION PHENOTYPE</scope>
</reference>
<reference key="8">
    <citation type="journal article" date="1994" name="FEMS Microbiol. Lett.">
        <title>The cydD gene product, component of a heterodimeric ABC transporter, is required for assembly of periplasmic cytochrome c and of cytochrome bd in Escherichia coli.</title>
        <authorList>
            <person name="Poole R.K."/>
            <person name="Gibson F."/>
            <person name="Wu G."/>
        </authorList>
    </citation>
    <scope>FUNCTION IN CYTOCHROME C FORMATION</scope>
    <scope>DISRUPTION PHENOTYPE</scope>
</reference>
<reference key="9">
    <citation type="journal article" date="1997" name="J. Bacteriol.">
        <title>Transcriptional regulation of the cydDC operon, encoding a heterodimeric ABC transporter required for assembly of cytochromes c and bd in Escherichia coli K-12: regulation by oxygen and alternative electron acceptors.</title>
        <authorList>
            <person name="Cook G.M."/>
            <person name="Membrillo-Hernandez J."/>
            <person name="Poole R.K."/>
        </authorList>
    </citation>
    <scope>INDUCTION</scope>
</reference>
<reference key="10">
    <citation type="journal article" date="2002" name="Arch. Microbiol.">
        <title>A novel haem compound accumulated in Escherichia coli overexpressing the cydDC operon, encoding an ABC-type transporter required for cytochrome assembly.</title>
        <authorList>
            <person name="Cook G.M."/>
            <person name="Cruz-Ramos H."/>
            <person name="Moir A.J."/>
            <person name="Poole R.K."/>
        </authorList>
    </citation>
    <scope>FUNCTION</scope>
</reference>
<reference key="11">
    <citation type="journal article" date="2002" name="J. Biol. Chem.">
        <title>Cysteine is exported from the Escherichia coli cytoplasm by CydDC, an ATP-binding cassette-type transporter required for cytochrome assembly.</title>
        <authorList>
            <person name="Pittman M.S."/>
            <person name="Corker H."/>
            <person name="Wu G."/>
            <person name="Binet M.B."/>
            <person name="Moir A.J."/>
            <person name="Poole R.K."/>
        </authorList>
    </citation>
    <scope>FUNCTION IN CYSTEINE EXPORT</scope>
    <scope>CATALYTIC ACTIVITY</scope>
    <scope>OVEREXPRESSION</scope>
    <scope>DISRUPTION PHENOTYPE</scope>
</reference>
<reference key="12">
    <citation type="journal article" date="2004" name="Microbiology">
        <title>Membrane topology and mutational analysis of Escherichia coli CydDC, an ABC-type cysteine exporter required for cytochrome assembly.</title>
        <authorList>
            <person name="Cruz-Ramos H."/>
            <person name="Cook G.M."/>
            <person name="Wu G."/>
            <person name="Cleeter M.W."/>
            <person name="Poole R.K."/>
        </authorList>
    </citation>
    <scope>FUNCTION</scope>
    <scope>SUBUNIT</scope>
    <scope>SUBCELLULAR LOCATION</scope>
    <scope>TOPOLOGY</scope>
    <scope>MUTAGENESIS OF ARG-210; ARG-216; ARG-238 AND ARG-244</scope>
    <source>
        <strain>K12</strain>
    </source>
</reference>
<reference key="13">
    <citation type="journal article" date="2005" name="J. Biol. Chem.">
        <title>A bacterial glutathione transporter (Escherichia coli CydDC) exports reductant to the periplasm.</title>
        <authorList>
            <person name="Pittman M.S."/>
            <person name="Robinson H.C."/>
            <person name="Poole R.K."/>
        </authorList>
    </citation>
    <scope>FUNCTION IN GLUTATHIONE EXPORT</scope>
    <scope>CATALYTIC ACTIVITY</scope>
    <scope>ACTIVITY REGULATION</scope>
</reference>
<reference key="14">
    <citation type="journal article" date="2005" name="Science">
        <title>Global topology analysis of the Escherichia coli inner membrane proteome.</title>
        <authorList>
            <person name="Daley D.O."/>
            <person name="Rapp M."/>
            <person name="Granseth E."/>
            <person name="Melen K."/>
            <person name="Drew D."/>
            <person name="von Heijne G."/>
        </authorList>
    </citation>
    <scope>SUBCELLULAR LOCATION</scope>
    <source>
        <strain>K12 / MG1655 / ATCC 47076</strain>
    </source>
</reference>
<reference key="15">
    <citation type="journal article" date="2014" name="J. Biol. Chem.">
        <title>Structure and function of the bacterial heterodimeric ABC transporter CydDC: stimulation of ATPase activity by thiol and heme compounds.</title>
        <authorList>
            <person name="Yamashita M."/>
            <person name="Shepherd M."/>
            <person name="Booth W.I."/>
            <person name="Xie H."/>
            <person name="Postis V."/>
            <person name="Nyathi Y."/>
            <person name="Tzokov S.B."/>
            <person name="Poole R.K."/>
            <person name="Baldwin S.A."/>
            <person name="Bullough P.A."/>
        </authorList>
    </citation>
    <scope>FUNCTION</scope>
    <scope>ATPASE ACTIVITY</scope>
    <scope>ACTIVITY REGULATION</scope>
    <scope>INTERACTION WITH CYDC AND HEME</scope>
    <scope>SUBUNIT</scope>
</reference>
<reference key="16">
    <citation type="journal article" date="2020" name="Proc. Natl. Acad. Sci. U.S.A.">
        <title>CydDC functions as a cytoplasmic cystine reductase to sensitize Escherichia coli to oxidative stress and aminoglycosides.</title>
        <authorList>
            <person name="Mironov A."/>
            <person name="Seregina T."/>
            <person name="Shatalin K."/>
            <person name="Nagornykh M."/>
            <person name="Shakulov R."/>
            <person name="Nudler E."/>
        </authorList>
    </citation>
    <scope>PROPOSED FUNCTION AS A CYTOPLASMIC CYSTINE REDUCTASE</scope>
</reference>
<reference key="17">
    <citation type="journal article" date="2019" name="Res. Microbiol.">
        <title>The CydDC family of transporters.</title>
        <authorList>
            <person name="Poole R.K."/>
            <person name="Cozens A.G."/>
            <person name="Shepherd M."/>
        </authorList>
    </citation>
    <scope>REVIEW</scope>
</reference>
<evidence type="ECO:0000255" key="1"/>
<evidence type="ECO:0000255" key="2">
    <source>
        <dbReference type="PROSITE-ProRule" id="PRU00434"/>
    </source>
</evidence>
<evidence type="ECO:0000255" key="3">
    <source>
        <dbReference type="PROSITE-ProRule" id="PRU00441"/>
    </source>
</evidence>
<evidence type="ECO:0000269" key="4">
    <source>
    </source>
</evidence>
<evidence type="ECO:0000269" key="5">
    <source>
    </source>
</evidence>
<evidence type="ECO:0000269" key="6">
    <source>
    </source>
</evidence>
<evidence type="ECO:0000269" key="7">
    <source>
    </source>
</evidence>
<evidence type="ECO:0000269" key="8">
    <source>
    </source>
</evidence>
<evidence type="ECO:0000269" key="9">
    <source>
    </source>
</evidence>
<evidence type="ECO:0000269" key="10">
    <source>
    </source>
</evidence>
<evidence type="ECO:0000269" key="11">
    <source>
    </source>
</evidence>
<evidence type="ECO:0000269" key="12">
    <source>
    </source>
</evidence>
<evidence type="ECO:0000269" key="13">
    <source>
    </source>
</evidence>
<evidence type="ECO:0000269" key="14">
    <source>
    </source>
</evidence>
<evidence type="ECO:0000303" key="15">
    <source>
    </source>
</evidence>
<evidence type="ECO:0000303" key="16">
    <source>
    </source>
</evidence>
<evidence type="ECO:0000305" key="17"/>
<evidence type="ECO:0000305" key="18">
    <source>
    </source>
</evidence>
<evidence type="ECO:0000305" key="19">
    <source>
    </source>
</evidence>
<evidence type="ECO:0000305" key="20">
    <source>
    </source>
</evidence>
<evidence type="ECO:0007829" key="21">
    <source>
        <dbReference type="PDB" id="7ZD5"/>
    </source>
</evidence>
<evidence type="ECO:0007829" key="22">
    <source>
        <dbReference type="PDB" id="7ZDE"/>
    </source>
</evidence>
<evidence type="ECO:0007829" key="23">
    <source>
        <dbReference type="PDB" id="7ZDF"/>
    </source>
</evidence>
<evidence type="ECO:0007829" key="24">
    <source>
        <dbReference type="PDB" id="7ZDG"/>
    </source>
</evidence>
<evidence type="ECO:0007829" key="25">
    <source>
        <dbReference type="PDB" id="7ZDT"/>
    </source>
</evidence>
<evidence type="ECO:0007829" key="26">
    <source>
        <dbReference type="PDB" id="7ZDW"/>
    </source>
</evidence>
<evidence type="ECO:0007829" key="27">
    <source>
        <dbReference type="PDB" id="7ZE5"/>
    </source>
</evidence>
<evidence type="ECO:0007829" key="28">
    <source>
        <dbReference type="PDB" id="8IPT"/>
    </source>
</evidence>
<dbReference type="EC" id="7.4.2.-" evidence="5 9"/>
<dbReference type="EMBL" id="L21749">
    <property type="protein sequence ID" value="AAA66171.1"/>
    <property type="molecule type" value="Genomic_DNA"/>
</dbReference>
<dbReference type="EMBL" id="U00096">
    <property type="protein sequence ID" value="AAC73973.1"/>
    <property type="molecule type" value="Genomic_DNA"/>
</dbReference>
<dbReference type="EMBL" id="AP009048">
    <property type="protein sequence ID" value="BAA35612.1"/>
    <property type="molecule type" value="Genomic_DNA"/>
</dbReference>
<dbReference type="EMBL" id="L25859">
    <property type="protein sequence ID" value="AAC36863.1"/>
    <property type="molecule type" value="Unassigned_DNA"/>
</dbReference>
<dbReference type="EMBL" id="M95935">
    <property type="protein sequence ID" value="AAA23995.1"/>
    <property type="status" value="ALT_FRAME"/>
    <property type="molecule type" value="Genomic_DNA"/>
</dbReference>
<dbReference type="PIR" id="F64827">
    <property type="entry name" value="F64827"/>
</dbReference>
<dbReference type="RefSeq" id="NP_415407.1">
    <property type="nucleotide sequence ID" value="NC_000913.3"/>
</dbReference>
<dbReference type="RefSeq" id="WP_001043598.1">
    <property type="nucleotide sequence ID" value="NZ_LN832404.1"/>
</dbReference>
<dbReference type="PDB" id="7ZD5">
    <property type="method" value="EM"/>
    <property type="resolution" value="3.17 A"/>
    <property type="chains" value="D=1-588"/>
</dbReference>
<dbReference type="PDB" id="7ZDA">
    <property type="method" value="EM"/>
    <property type="resolution" value="3.17 A"/>
    <property type="chains" value="D=1-588"/>
</dbReference>
<dbReference type="PDB" id="7ZDB">
    <property type="method" value="EM"/>
    <property type="resolution" value="3.35 A"/>
    <property type="chains" value="D=1-588"/>
</dbReference>
<dbReference type="PDB" id="7ZDC">
    <property type="method" value="EM"/>
    <property type="resolution" value="3.13 A"/>
    <property type="chains" value="D=1-588"/>
</dbReference>
<dbReference type="PDB" id="7ZDE">
    <property type="method" value="EM"/>
    <property type="resolution" value="3.17 A"/>
    <property type="chains" value="D=1-588"/>
</dbReference>
<dbReference type="PDB" id="7ZDF">
    <property type="method" value="EM"/>
    <property type="resolution" value="2.94 A"/>
    <property type="chains" value="D=1-588"/>
</dbReference>
<dbReference type="PDB" id="7ZDG">
    <property type="method" value="EM"/>
    <property type="resolution" value="2.77 A"/>
    <property type="chains" value="D=1-588"/>
</dbReference>
<dbReference type="PDB" id="7ZDK">
    <property type="method" value="EM"/>
    <property type="resolution" value="3.01 A"/>
    <property type="chains" value="D=1-588"/>
</dbReference>
<dbReference type="PDB" id="7ZDL">
    <property type="method" value="EM"/>
    <property type="resolution" value="3.35 A"/>
    <property type="chains" value="D=1-588"/>
</dbReference>
<dbReference type="PDB" id="7ZDR">
    <property type="method" value="EM"/>
    <property type="resolution" value="3.05 A"/>
    <property type="chains" value="D=1-588"/>
</dbReference>
<dbReference type="PDB" id="7ZDS">
    <property type="method" value="EM"/>
    <property type="resolution" value="3.26 A"/>
    <property type="chains" value="D=1-588"/>
</dbReference>
<dbReference type="PDB" id="7ZDT">
    <property type="method" value="EM"/>
    <property type="resolution" value="2.71 A"/>
    <property type="chains" value="D=1-588"/>
</dbReference>
<dbReference type="PDB" id="7ZDU">
    <property type="method" value="EM"/>
    <property type="resolution" value="2.98 A"/>
    <property type="chains" value="D=1-588"/>
</dbReference>
<dbReference type="PDB" id="7ZDV">
    <property type="method" value="EM"/>
    <property type="resolution" value="3.05 A"/>
    <property type="chains" value="D=1-588"/>
</dbReference>
<dbReference type="PDB" id="7ZDW">
    <property type="method" value="EM"/>
    <property type="resolution" value="3.35 A"/>
    <property type="chains" value="D=1-588"/>
</dbReference>
<dbReference type="PDB" id="7ZE5">
    <property type="method" value="EM"/>
    <property type="resolution" value="2.94 A"/>
    <property type="chains" value="D=1-588"/>
</dbReference>
<dbReference type="PDB" id="7ZEC">
    <property type="method" value="EM"/>
    <property type="resolution" value="3.05 A"/>
    <property type="chains" value="D=1-588"/>
</dbReference>
<dbReference type="PDB" id="8IPS">
    <property type="method" value="EM"/>
    <property type="resolution" value="3.60 A"/>
    <property type="chains" value="B=1-588"/>
</dbReference>
<dbReference type="PDB" id="8IPT">
    <property type="method" value="EM"/>
    <property type="resolution" value="3.50 A"/>
    <property type="chains" value="A/E=1-588"/>
</dbReference>
<dbReference type="PDBsum" id="7ZD5"/>
<dbReference type="PDBsum" id="7ZDA"/>
<dbReference type="PDBsum" id="7ZDB"/>
<dbReference type="PDBsum" id="7ZDC"/>
<dbReference type="PDBsum" id="7ZDE"/>
<dbReference type="PDBsum" id="7ZDF"/>
<dbReference type="PDBsum" id="7ZDG"/>
<dbReference type="PDBsum" id="7ZDK"/>
<dbReference type="PDBsum" id="7ZDL"/>
<dbReference type="PDBsum" id="7ZDR"/>
<dbReference type="PDBsum" id="7ZDS"/>
<dbReference type="PDBsum" id="7ZDT"/>
<dbReference type="PDBsum" id="7ZDU"/>
<dbReference type="PDBsum" id="7ZDV"/>
<dbReference type="PDBsum" id="7ZDW"/>
<dbReference type="PDBsum" id="7ZE5"/>
<dbReference type="PDBsum" id="7ZEC"/>
<dbReference type="PDBsum" id="8IPS"/>
<dbReference type="PDBsum" id="8IPT"/>
<dbReference type="EMDB" id="EMD-14636"/>
<dbReference type="EMDB" id="EMD-14638"/>
<dbReference type="EMDB" id="EMD-14639"/>
<dbReference type="EMDB" id="EMD-14640"/>
<dbReference type="EMDB" id="EMD-14641"/>
<dbReference type="EMDB" id="EMD-14642"/>
<dbReference type="EMDB" id="EMD-14643"/>
<dbReference type="EMDB" id="EMD-14644"/>
<dbReference type="EMDB" id="EMD-14645"/>
<dbReference type="EMDB" id="EMD-14646"/>
<dbReference type="EMDB" id="EMD-14647"/>
<dbReference type="EMDB" id="EMD-14649"/>
<dbReference type="EMDB" id="EMD-14652"/>
<dbReference type="EMDB" id="EMD-14653"/>
<dbReference type="EMDB" id="EMD-14654"/>
<dbReference type="EMDB" id="EMD-14655"/>
<dbReference type="EMDB" id="EMD-14656"/>
<dbReference type="EMDB" id="EMD-14657"/>
<dbReference type="EMDB" id="EMD-14659"/>
<dbReference type="EMDB" id="EMD-14660"/>
<dbReference type="EMDB" id="EMD-14662"/>
<dbReference type="EMDB" id="EMD-14663"/>
<dbReference type="EMDB" id="EMD-14665"/>
<dbReference type="EMDB" id="EMD-14667"/>
<dbReference type="EMDB" id="EMD-14668"/>
<dbReference type="EMDB" id="EMD-14669"/>
<dbReference type="EMDB" id="EMD-14670"/>
<dbReference type="EMDB" id="EMD-14671"/>
<dbReference type="EMDB" id="EMD-14672"/>
<dbReference type="EMDB" id="EMD-14673"/>
<dbReference type="EMDB" id="EMD-14674"/>
<dbReference type="EMDB" id="EMD-14675"/>
<dbReference type="EMDB" id="EMD-14676"/>
<dbReference type="EMDB" id="EMD-14684"/>
<dbReference type="EMDB" id="EMD-14689"/>
<dbReference type="EMDB" id="EMD-15264"/>
<dbReference type="EMDB" id="EMD-15265"/>
<dbReference type="SMR" id="P29018"/>
<dbReference type="BioGRID" id="4261714">
    <property type="interactions" value="26"/>
</dbReference>
<dbReference type="ComplexPortal" id="CPX-4601">
    <property type="entry name" value="Glutathione/cysteine ABC exporter complex"/>
</dbReference>
<dbReference type="DIP" id="DIP-9363N"/>
<dbReference type="FunCoup" id="P29018">
    <property type="interactions" value="220"/>
</dbReference>
<dbReference type="IntAct" id="P29018">
    <property type="interactions" value="2"/>
</dbReference>
<dbReference type="STRING" id="511145.b0887"/>
<dbReference type="TCDB" id="3.A.1.129.1">
    <property type="family name" value="the atp-binding cassette (abc) superfamily"/>
</dbReference>
<dbReference type="jPOST" id="P29018"/>
<dbReference type="PaxDb" id="511145-b0887"/>
<dbReference type="EnsemblBacteria" id="AAC73973">
    <property type="protein sequence ID" value="AAC73973"/>
    <property type="gene ID" value="b0887"/>
</dbReference>
<dbReference type="GeneID" id="949052"/>
<dbReference type="KEGG" id="ecj:JW0870"/>
<dbReference type="KEGG" id="eco:b0887"/>
<dbReference type="KEGG" id="ecoc:C3026_05500"/>
<dbReference type="PATRIC" id="fig|1411691.4.peg.1391"/>
<dbReference type="EchoBASE" id="EB1377"/>
<dbReference type="eggNOG" id="COG4988">
    <property type="taxonomic scope" value="Bacteria"/>
</dbReference>
<dbReference type="HOGENOM" id="CLU_000604_84_9_6"/>
<dbReference type="InParanoid" id="P29018"/>
<dbReference type="OMA" id="FPLNWAA"/>
<dbReference type="OrthoDB" id="9806127at2"/>
<dbReference type="PhylomeDB" id="P29018"/>
<dbReference type="BioCyc" id="EcoCyc:CYDD-MONOMER"/>
<dbReference type="BioCyc" id="MetaCyc:CYDD-MONOMER"/>
<dbReference type="PRO" id="PR:P29018"/>
<dbReference type="Proteomes" id="UP000000625">
    <property type="component" value="Chromosome"/>
</dbReference>
<dbReference type="GO" id="GO:0043190">
    <property type="term" value="C:ATP-binding cassette (ABC) transporter complex"/>
    <property type="evidence" value="ECO:0000303"/>
    <property type="project" value="ComplexPortal"/>
</dbReference>
<dbReference type="GO" id="GO:0055051">
    <property type="term" value="C:ATP-binding cassette (ABC) transporter complex, integrated substrate binding"/>
    <property type="evidence" value="ECO:0000314"/>
    <property type="project" value="EcoCyc"/>
</dbReference>
<dbReference type="GO" id="GO:0005886">
    <property type="term" value="C:plasma membrane"/>
    <property type="evidence" value="ECO:0000314"/>
    <property type="project" value="EcoCyc"/>
</dbReference>
<dbReference type="GO" id="GO:0015439">
    <property type="term" value="F:ABC-type heme transporter activity"/>
    <property type="evidence" value="ECO:0000314"/>
    <property type="project" value="EcoCyc"/>
</dbReference>
<dbReference type="GO" id="GO:0005524">
    <property type="term" value="F:ATP binding"/>
    <property type="evidence" value="ECO:0007669"/>
    <property type="project" value="UniProtKB-KW"/>
</dbReference>
<dbReference type="GO" id="GO:0016887">
    <property type="term" value="F:ATP hydrolysis activity"/>
    <property type="evidence" value="ECO:0007669"/>
    <property type="project" value="InterPro"/>
</dbReference>
<dbReference type="GO" id="GO:0034040">
    <property type="term" value="F:ATPase-coupled lipid transmembrane transporter activity"/>
    <property type="evidence" value="ECO:0000318"/>
    <property type="project" value="GO_Central"/>
</dbReference>
<dbReference type="GO" id="GO:0045454">
    <property type="term" value="P:cell redox homeostasis"/>
    <property type="evidence" value="ECO:0000315"/>
    <property type="project" value="EcoCyc"/>
</dbReference>
<dbReference type="GO" id="GO:0033228">
    <property type="term" value="P:cysteine export across plasma membrane"/>
    <property type="evidence" value="ECO:0000314"/>
    <property type="project" value="EcoCyc"/>
</dbReference>
<dbReference type="GO" id="GO:1903605">
    <property type="term" value="P:cytochrome biosynthetic process"/>
    <property type="evidence" value="ECO:0000315"/>
    <property type="project" value="EcoCyc"/>
</dbReference>
<dbReference type="GO" id="GO:0034775">
    <property type="term" value="P:glutathione transmembrane transport"/>
    <property type="evidence" value="ECO:0000314"/>
    <property type="project" value="EcoCyc"/>
</dbReference>
<dbReference type="GO" id="GO:0035351">
    <property type="term" value="P:heme transmembrane transport"/>
    <property type="evidence" value="ECO:0000314"/>
    <property type="project" value="EcoCyc"/>
</dbReference>
<dbReference type="GO" id="GO:0055085">
    <property type="term" value="P:transmembrane transport"/>
    <property type="evidence" value="ECO:0000318"/>
    <property type="project" value="GO_Central"/>
</dbReference>
<dbReference type="CDD" id="cd18584">
    <property type="entry name" value="ABC_6TM_AarD_CydD"/>
    <property type="match status" value="1"/>
</dbReference>
<dbReference type="FunFam" id="1.20.1560.10:FF:000039">
    <property type="entry name" value="Cysteine/glutathione ABC transporter permease/ATP-binding protein CydD"/>
    <property type="match status" value="1"/>
</dbReference>
<dbReference type="FunFam" id="3.40.50.300:FF:000980">
    <property type="entry name" value="Cysteine/glutathione ABC transporter permease/ATP-binding protein CydD"/>
    <property type="match status" value="1"/>
</dbReference>
<dbReference type="Gene3D" id="1.20.1560.10">
    <property type="entry name" value="ABC transporter type 1, transmembrane domain"/>
    <property type="match status" value="1"/>
</dbReference>
<dbReference type="Gene3D" id="3.40.50.300">
    <property type="entry name" value="P-loop containing nucleotide triphosphate hydrolases"/>
    <property type="match status" value="1"/>
</dbReference>
<dbReference type="InterPro" id="IPR003593">
    <property type="entry name" value="AAA+_ATPase"/>
</dbReference>
<dbReference type="InterPro" id="IPR011527">
    <property type="entry name" value="ABC1_TM_dom"/>
</dbReference>
<dbReference type="InterPro" id="IPR036640">
    <property type="entry name" value="ABC1_TM_sf"/>
</dbReference>
<dbReference type="InterPro" id="IPR003439">
    <property type="entry name" value="ABC_transporter-like_ATP-bd"/>
</dbReference>
<dbReference type="InterPro" id="IPR017871">
    <property type="entry name" value="ABC_transporter-like_CS"/>
</dbReference>
<dbReference type="InterPro" id="IPR014216">
    <property type="entry name" value="ABC_transptr_CydD"/>
</dbReference>
<dbReference type="InterPro" id="IPR027417">
    <property type="entry name" value="P-loop_NTPase"/>
</dbReference>
<dbReference type="InterPro" id="IPR039421">
    <property type="entry name" value="Type_1_exporter"/>
</dbReference>
<dbReference type="NCBIfam" id="TIGR02857">
    <property type="entry name" value="CydD"/>
    <property type="match status" value="1"/>
</dbReference>
<dbReference type="NCBIfam" id="NF008379">
    <property type="entry name" value="PRK11174.1"/>
    <property type="match status" value="1"/>
</dbReference>
<dbReference type="PANTHER" id="PTHR24221">
    <property type="entry name" value="ATP-BINDING CASSETTE SUB-FAMILY B"/>
    <property type="match status" value="1"/>
</dbReference>
<dbReference type="PANTHER" id="PTHR24221:SF261">
    <property type="entry name" value="GLUTATHIONE_L-CYSTEINE TRANSPORT SYSTEM ATP-BINDING_PERMEASE PROTEIN CYDD"/>
    <property type="match status" value="1"/>
</dbReference>
<dbReference type="Pfam" id="PF00664">
    <property type="entry name" value="ABC_membrane"/>
    <property type="match status" value="1"/>
</dbReference>
<dbReference type="Pfam" id="PF00005">
    <property type="entry name" value="ABC_tran"/>
    <property type="match status" value="1"/>
</dbReference>
<dbReference type="SMART" id="SM00382">
    <property type="entry name" value="AAA"/>
    <property type="match status" value="1"/>
</dbReference>
<dbReference type="SUPFAM" id="SSF90123">
    <property type="entry name" value="ABC transporter transmembrane region"/>
    <property type="match status" value="1"/>
</dbReference>
<dbReference type="SUPFAM" id="SSF52540">
    <property type="entry name" value="P-loop containing nucleoside triphosphate hydrolases"/>
    <property type="match status" value="1"/>
</dbReference>
<dbReference type="PROSITE" id="PS50929">
    <property type="entry name" value="ABC_TM1F"/>
    <property type="match status" value="1"/>
</dbReference>
<dbReference type="PROSITE" id="PS00211">
    <property type="entry name" value="ABC_TRANSPORTER_1"/>
    <property type="match status" value="1"/>
</dbReference>
<dbReference type="PROSITE" id="PS50893">
    <property type="entry name" value="ABC_TRANSPORTER_2"/>
    <property type="match status" value="1"/>
</dbReference>
<keyword id="KW-0002">3D-structure</keyword>
<keyword id="KW-0029">Amino-acid transport</keyword>
<keyword id="KW-0067">ATP-binding</keyword>
<keyword id="KW-0997">Cell inner membrane</keyword>
<keyword id="KW-1003">Cell membrane</keyword>
<keyword id="KW-0472">Membrane</keyword>
<keyword id="KW-0547">Nucleotide-binding</keyword>
<keyword id="KW-1185">Reference proteome</keyword>
<keyword id="KW-1278">Translocase</keyword>
<keyword id="KW-0812">Transmembrane</keyword>
<keyword id="KW-1133">Transmembrane helix</keyword>
<keyword id="KW-0813">Transport</keyword>